<dbReference type="EMBL" id="U82228">
    <property type="protein sequence ID" value="AAC60322.1"/>
    <property type="molecule type" value="Genomic_DNA"/>
</dbReference>
<dbReference type="PIR" id="E58892">
    <property type="entry name" value="E58892"/>
</dbReference>
<dbReference type="RefSeq" id="NP_008333.1">
    <property type="nucleotide sequence ID" value="NC_001804.1"/>
</dbReference>
<dbReference type="SMR" id="O03168"/>
<dbReference type="STRING" id="7897.ENSLACP00000023658"/>
<dbReference type="Ensembl" id="ENSLACT00000026718.1">
    <property type="protein sequence ID" value="ENSLACP00000023658.1"/>
    <property type="gene ID" value="ENSLACG00000022688.1"/>
</dbReference>
<dbReference type="GeneID" id="808087"/>
<dbReference type="KEGG" id="lcm:808087"/>
<dbReference type="CTD" id="4509"/>
<dbReference type="eggNOG" id="ENOG502SGKX">
    <property type="taxonomic scope" value="Eukaryota"/>
</dbReference>
<dbReference type="GeneTree" id="ENSGT00400000025179"/>
<dbReference type="HOGENOM" id="CLU_212888_0_0_1"/>
<dbReference type="InParanoid" id="O03168"/>
<dbReference type="OMA" id="MPQLNPN"/>
<dbReference type="Proteomes" id="UP000008672">
    <property type="component" value="Mitochondrion"/>
</dbReference>
<dbReference type="Bgee" id="ENSLACG00000022688">
    <property type="expression patterns" value="Expressed in pelvic fin and 6 other cell types or tissues"/>
</dbReference>
<dbReference type="GO" id="GO:0031966">
    <property type="term" value="C:mitochondrial membrane"/>
    <property type="evidence" value="ECO:0007669"/>
    <property type="project" value="UniProtKB-SubCell"/>
</dbReference>
<dbReference type="GO" id="GO:0045259">
    <property type="term" value="C:proton-transporting ATP synthase complex"/>
    <property type="evidence" value="ECO:0007669"/>
    <property type="project" value="UniProtKB-KW"/>
</dbReference>
<dbReference type="GO" id="GO:0015078">
    <property type="term" value="F:proton transmembrane transporter activity"/>
    <property type="evidence" value="ECO:0007669"/>
    <property type="project" value="InterPro"/>
</dbReference>
<dbReference type="GO" id="GO:0015986">
    <property type="term" value="P:proton motive force-driven ATP synthesis"/>
    <property type="evidence" value="ECO:0007669"/>
    <property type="project" value="InterPro"/>
</dbReference>
<dbReference type="InterPro" id="IPR001421">
    <property type="entry name" value="ATP8_metazoa"/>
</dbReference>
<dbReference type="InterPro" id="IPR050635">
    <property type="entry name" value="ATPase_protein_8"/>
</dbReference>
<dbReference type="PANTHER" id="PTHR39937">
    <property type="entry name" value="ATP SYNTHASE PROTEIN 8"/>
    <property type="match status" value="1"/>
</dbReference>
<dbReference type="PANTHER" id="PTHR39937:SF1">
    <property type="entry name" value="ATP SYNTHASE PROTEIN 8"/>
    <property type="match status" value="1"/>
</dbReference>
<dbReference type="Pfam" id="PF00895">
    <property type="entry name" value="ATP-synt_8"/>
    <property type="match status" value="1"/>
</dbReference>
<sequence>MPQLNPSPWLLILLFSWLIFLTMLPSKTQLHTFPNMPSTQNMCKQEPEPWTWPWA</sequence>
<name>ATP8_LATCH</name>
<evidence type="ECO:0000250" key="1">
    <source>
        <dbReference type="UniProtKB" id="P03928"/>
    </source>
</evidence>
<evidence type="ECO:0000250" key="2">
    <source>
        <dbReference type="UniProtKB" id="P19483"/>
    </source>
</evidence>
<evidence type="ECO:0000255" key="3"/>
<evidence type="ECO:0000256" key="4">
    <source>
        <dbReference type="SAM" id="MobiDB-lite"/>
    </source>
</evidence>
<evidence type="ECO:0000305" key="5"/>
<protein>
    <recommendedName>
        <fullName evidence="1">ATP synthase F(0) complex subunit 8</fullName>
    </recommendedName>
    <alternativeName>
        <fullName>A6L</fullName>
    </alternativeName>
    <alternativeName>
        <fullName>F-ATPase subunit 8</fullName>
    </alternativeName>
</protein>
<accession>O03168</accession>
<geneLocation type="mitochondrion"/>
<organism>
    <name type="scientific">Latimeria chalumnae</name>
    <name type="common">Coelacanth</name>
    <dbReference type="NCBI Taxonomy" id="7897"/>
    <lineage>
        <taxon>Eukaryota</taxon>
        <taxon>Metazoa</taxon>
        <taxon>Chordata</taxon>
        <taxon>Craniata</taxon>
        <taxon>Vertebrata</taxon>
        <taxon>Euteleostomi</taxon>
        <taxon>Coelacanthiformes</taxon>
        <taxon>Coelacanthidae</taxon>
        <taxon>Latimeria</taxon>
    </lineage>
</organism>
<reference key="1">
    <citation type="journal article" date="1997" name="Genetics">
        <title>The complete DNA sequence of the mitochondrial genome of a 'living fossil,' the coelacanth (Latimeria chalumnae).</title>
        <authorList>
            <person name="Zardoya R."/>
            <person name="Meyer A."/>
        </authorList>
    </citation>
    <scope>NUCLEOTIDE SEQUENCE [LARGE SCALE GENOMIC DNA]</scope>
</reference>
<gene>
    <name evidence="1" type="primary">MT-ATP8</name>
    <name type="synonym">ATP8</name>
    <name type="synonym">ATPASE8</name>
    <name type="synonym">MTATP8</name>
</gene>
<feature type="chain" id="PRO_0000195541" description="ATP synthase F(0) complex subunit 8">
    <location>
        <begin position="1"/>
        <end position="55"/>
    </location>
</feature>
<feature type="transmembrane region" description="Helical" evidence="3">
    <location>
        <begin position="4"/>
        <end position="24"/>
    </location>
</feature>
<feature type="region of interest" description="Disordered" evidence="4">
    <location>
        <begin position="36"/>
        <end position="55"/>
    </location>
</feature>
<proteinExistence type="inferred from homology"/>
<comment type="function">
    <text evidence="1 2">Subunit 8, of the mitochondrial membrane ATP synthase complex (F(1)F(0) ATP synthase or Complex V) that produces ATP from ADP in the presence of a proton gradient across the membrane which is generated by electron transport complexes of the respiratory chain. ATP synthase complex consist of a soluble F(1) head domain - the catalytic core - and a membrane F(1) domain - the membrane proton channel. These two domains are linked by a central stalk rotating inside the F(1) region and a stationary peripheral stalk. During catalysis, ATP synthesis in the catalytic domain of F(1) is coupled via a rotary mechanism of the central stalk subunits to proton translocation (By similarity). In vivo, can only synthesize ATP although its ATP hydrolase activity can be activated artificially in vitro (By similarity). Part of the complex F(0) domain (By similarity).</text>
</comment>
<comment type="subunit">
    <text evidence="1">Component of the ATP synthase complex composed at least of ATP5F1A/subunit alpha, ATP5F1B/subunit beta, ATP5MC1/subunit c (homooctomer), MT-ATP6/subunit a, MT-ATP8/subunit 8, ATP5ME/subunit e, ATP5MF/subunit f, ATP5MG/subunit g, ATP5MK/subunit k, ATP5MJ/subunit j, ATP5F1C/subunit gamma, ATP5F1D/subunit delta, ATP5F1E/subunit epsilon, ATP5PF/subunit F6, ATP5PB/subunit b, ATP5PD/subunit d, ATP5PO/subunit OSCP. ATP synthase complex consists of a soluble F(1) head domain (subunits alpha(3) and beta(3)) - the catalytic core - and a membrane F(0) domain - the membrane proton channel (subunits c, a, 8, e, f, g, k and j). These two domains are linked by a central stalk (subunits gamma, delta, and epsilon) rotating inside the F1 region and a stationary peripheral stalk (subunits F6, b, d, and OSCP).</text>
</comment>
<comment type="subcellular location">
    <subcellularLocation>
        <location>Mitochondrion membrane</location>
        <topology>Single-pass membrane protein</topology>
    </subcellularLocation>
</comment>
<comment type="similarity">
    <text evidence="5">Belongs to the ATPase protein 8 family.</text>
</comment>
<keyword id="KW-0066">ATP synthesis</keyword>
<keyword id="KW-0138">CF(0)</keyword>
<keyword id="KW-0375">Hydrogen ion transport</keyword>
<keyword id="KW-0406">Ion transport</keyword>
<keyword id="KW-0472">Membrane</keyword>
<keyword id="KW-0496">Mitochondrion</keyword>
<keyword id="KW-1185">Reference proteome</keyword>
<keyword id="KW-0812">Transmembrane</keyword>
<keyword id="KW-1133">Transmembrane helix</keyword>
<keyword id="KW-0813">Transport</keyword>